<keyword id="KW-0067">ATP-binding</keyword>
<keyword id="KW-0418">Kinase</keyword>
<keyword id="KW-0460">Magnesium</keyword>
<keyword id="KW-0479">Metal-binding</keyword>
<keyword id="KW-0547">Nucleotide-binding</keyword>
<keyword id="KW-1185">Reference proteome</keyword>
<keyword id="KW-0711">Selenium</keyword>
<keyword id="KW-0712">Selenocysteine</keyword>
<keyword id="KW-0808">Transferase</keyword>
<organism>
    <name type="scientific">Haemophilus influenzae (strain ATCC 51907 / DSM 11121 / KW20 / Rd)</name>
    <dbReference type="NCBI Taxonomy" id="71421"/>
    <lineage>
        <taxon>Bacteria</taxon>
        <taxon>Pseudomonadati</taxon>
        <taxon>Pseudomonadota</taxon>
        <taxon>Gammaproteobacteria</taxon>
        <taxon>Pasteurellales</taxon>
        <taxon>Pasteurellaceae</taxon>
        <taxon>Haemophilus</taxon>
    </lineage>
</organism>
<protein>
    <recommendedName>
        <fullName evidence="2">Selenide, water dikinase</fullName>
        <ecNumber evidence="2">2.7.9.3</ecNumber>
    </recommendedName>
    <alternativeName>
        <fullName evidence="2">Selenium donor protein</fullName>
    </alternativeName>
    <alternativeName>
        <fullName evidence="2">Selenophosphate synthase</fullName>
    </alternativeName>
</protein>
<reference key="1">
    <citation type="journal article" date="1995" name="Science">
        <title>Whole-genome random sequencing and assembly of Haemophilus influenzae Rd.</title>
        <authorList>
            <person name="Fleischmann R.D."/>
            <person name="Adams M.D."/>
            <person name="White O."/>
            <person name="Clayton R.A."/>
            <person name="Kirkness E.F."/>
            <person name="Kerlavage A.R."/>
            <person name="Bult C.J."/>
            <person name="Tomb J.-F."/>
            <person name="Dougherty B.A."/>
            <person name="Merrick J.M."/>
            <person name="McKenney K."/>
            <person name="Sutton G.G."/>
            <person name="FitzHugh W."/>
            <person name="Fields C.A."/>
            <person name="Gocayne J.D."/>
            <person name="Scott J.D."/>
            <person name="Shirley R."/>
            <person name="Liu L.-I."/>
            <person name="Glodek A."/>
            <person name="Kelley J.M."/>
            <person name="Weidman J.F."/>
            <person name="Phillips C.A."/>
            <person name="Spriggs T."/>
            <person name="Hedblom E."/>
            <person name="Cotton M.D."/>
            <person name="Utterback T.R."/>
            <person name="Hanna M.C."/>
            <person name="Nguyen D.T."/>
            <person name="Saudek D.M."/>
            <person name="Brandon R.C."/>
            <person name="Fine L.D."/>
            <person name="Fritchman J.L."/>
            <person name="Fuhrmann J.L."/>
            <person name="Geoghagen N.S.M."/>
            <person name="Gnehm C.L."/>
            <person name="McDonald L.A."/>
            <person name="Small K.V."/>
            <person name="Fraser C.M."/>
            <person name="Smith H.O."/>
            <person name="Venter J.C."/>
        </authorList>
    </citation>
    <scope>NUCLEOTIDE SEQUENCE [LARGE SCALE GENOMIC DNA]</scope>
    <source>
        <strain>ATCC 51907 / DSM 11121 / KW20 / Rd</strain>
    </source>
</reference>
<accession>P43911</accession>
<gene>
    <name evidence="2" type="primary">selD</name>
    <name type="ordered locus">HI_0200</name>
</gene>
<dbReference type="EC" id="2.7.9.3" evidence="2"/>
<dbReference type="EMBL" id="L42023">
    <property type="protein sequence ID" value="AAC21869.1"/>
    <property type="status" value="ALT_SEQ"/>
    <property type="molecule type" value="Genomic_DNA"/>
</dbReference>
<dbReference type="PIR" id="A64054">
    <property type="entry name" value="A64054"/>
</dbReference>
<dbReference type="RefSeq" id="NP_438369.1">
    <property type="nucleotide sequence ID" value="NC_000907.1"/>
</dbReference>
<dbReference type="STRING" id="71421.HI_0200"/>
<dbReference type="EnsemblBacteria" id="AAC21869">
    <property type="protein sequence ID" value="AAC21869"/>
    <property type="gene ID" value="HI_0200"/>
</dbReference>
<dbReference type="KEGG" id="hin:HI_0200"/>
<dbReference type="PATRIC" id="fig|71421.8.peg.205"/>
<dbReference type="eggNOG" id="COG0709">
    <property type="taxonomic scope" value="Bacteria"/>
</dbReference>
<dbReference type="HOGENOM" id="CLU_032859_0_1_6"/>
<dbReference type="OrthoDB" id="9767928at2"/>
<dbReference type="BioCyc" id="HINF71421:G1GJ1-211-MONOMER"/>
<dbReference type="Proteomes" id="UP000000579">
    <property type="component" value="Chromosome"/>
</dbReference>
<dbReference type="GO" id="GO:0005737">
    <property type="term" value="C:cytoplasm"/>
    <property type="evidence" value="ECO:0000318"/>
    <property type="project" value="GO_Central"/>
</dbReference>
<dbReference type="GO" id="GO:0005524">
    <property type="term" value="F:ATP binding"/>
    <property type="evidence" value="ECO:0007669"/>
    <property type="project" value="UniProtKB-UniRule"/>
</dbReference>
<dbReference type="GO" id="GO:0000287">
    <property type="term" value="F:magnesium ion binding"/>
    <property type="evidence" value="ECO:0007669"/>
    <property type="project" value="UniProtKB-UniRule"/>
</dbReference>
<dbReference type="GO" id="GO:0004756">
    <property type="term" value="F:selenide, water dikinase activity"/>
    <property type="evidence" value="ECO:0000318"/>
    <property type="project" value="GO_Central"/>
</dbReference>
<dbReference type="GO" id="GO:0016260">
    <property type="term" value="P:selenocysteine biosynthetic process"/>
    <property type="evidence" value="ECO:0000318"/>
    <property type="project" value="GO_Central"/>
</dbReference>
<dbReference type="CDD" id="cd02195">
    <property type="entry name" value="SelD"/>
    <property type="match status" value="1"/>
</dbReference>
<dbReference type="FunFam" id="3.30.1330.10:FF:000003">
    <property type="entry name" value="Selenide, water dikinase"/>
    <property type="match status" value="1"/>
</dbReference>
<dbReference type="FunFam" id="3.90.650.10:FF:000004">
    <property type="entry name" value="Selenide, water dikinase"/>
    <property type="match status" value="1"/>
</dbReference>
<dbReference type="Gene3D" id="3.90.650.10">
    <property type="entry name" value="PurM-like C-terminal domain"/>
    <property type="match status" value="1"/>
</dbReference>
<dbReference type="Gene3D" id="3.30.1330.10">
    <property type="entry name" value="PurM-like, N-terminal domain"/>
    <property type="match status" value="1"/>
</dbReference>
<dbReference type="HAMAP" id="MF_00625">
    <property type="entry name" value="SelD"/>
    <property type="match status" value="1"/>
</dbReference>
<dbReference type="InterPro" id="IPR010918">
    <property type="entry name" value="PurM-like_C_dom"/>
</dbReference>
<dbReference type="InterPro" id="IPR036676">
    <property type="entry name" value="PurM-like_C_sf"/>
</dbReference>
<dbReference type="InterPro" id="IPR016188">
    <property type="entry name" value="PurM-like_N"/>
</dbReference>
<dbReference type="InterPro" id="IPR036921">
    <property type="entry name" value="PurM-like_N_sf"/>
</dbReference>
<dbReference type="InterPro" id="IPR023061">
    <property type="entry name" value="SelD_I"/>
</dbReference>
<dbReference type="InterPro" id="IPR004536">
    <property type="entry name" value="SPS/SelD"/>
</dbReference>
<dbReference type="NCBIfam" id="NF002098">
    <property type="entry name" value="PRK00943.1"/>
    <property type="match status" value="1"/>
</dbReference>
<dbReference type="NCBIfam" id="TIGR00476">
    <property type="entry name" value="selD"/>
    <property type="match status" value="1"/>
</dbReference>
<dbReference type="PANTHER" id="PTHR10256:SF0">
    <property type="entry name" value="INACTIVE SELENIDE, WATER DIKINASE-LIKE PROTEIN-RELATED"/>
    <property type="match status" value="1"/>
</dbReference>
<dbReference type="PANTHER" id="PTHR10256">
    <property type="entry name" value="SELENIDE, WATER DIKINASE"/>
    <property type="match status" value="1"/>
</dbReference>
<dbReference type="Pfam" id="PF00586">
    <property type="entry name" value="AIRS"/>
    <property type="match status" value="1"/>
</dbReference>
<dbReference type="Pfam" id="PF02769">
    <property type="entry name" value="AIRS_C"/>
    <property type="match status" value="1"/>
</dbReference>
<dbReference type="PIRSF" id="PIRSF036407">
    <property type="entry name" value="Selenphspht_syn"/>
    <property type="match status" value="1"/>
</dbReference>
<dbReference type="SUPFAM" id="SSF56042">
    <property type="entry name" value="PurM C-terminal domain-like"/>
    <property type="match status" value="1"/>
</dbReference>
<dbReference type="SUPFAM" id="SSF55326">
    <property type="entry name" value="PurM N-terminal domain-like"/>
    <property type="match status" value="1"/>
</dbReference>
<feature type="chain" id="PRO_0000127627" description="Selenide, water dikinase">
    <location>
        <begin position="1"/>
        <end position="346"/>
    </location>
</feature>
<feature type="active site" evidence="2">
    <location>
        <position position="16"/>
    </location>
</feature>
<feature type="binding site" description="in other chain" evidence="2">
    <location>
        <position position="19"/>
    </location>
    <ligand>
        <name>ATP</name>
        <dbReference type="ChEBI" id="CHEBI:30616"/>
        <note>ligand shared between dimeric partners</note>
    </ligand>
</feature>
<feature type="binding site" description="in other chain" evidence="2">
    <location>
        <begin position="47"/>
        <end position="49"/>
    </location>
    <ligand>
        <name>ATP</name>
        <dbReference type="ChEBI" id="CHEBI:30616"/>
        <note>ligand shared between dimeric partners</note>
    </ligand>
</feature>
<feature type="binding site" evidence="2">
    <location>
        <position position="50"/>
    </location>
    <ligand>
        <name>Mg(2+)</name>
        <dbReference type="ChEBI" id="CHEBI:18420"/>
    </ligand>
</feature>
<feature type="binding site" description="in other chain" evidence="2">
    <location>
        <position position="67"/>
    </location>
    <ligand>
        <name>ATP</name>
        <dbReference type="ChEBI" id="CHEBI:30616"/>
        <note>ligand shared between dimeric partners</note>
    </ligand>
</feature>
<feature type="binding site" description="in other chain" evidence="2">
    <location>
        <position position="90"/>
    </location>
    <ligand>
        <name>ATP</name>
        <dbReference type="ChEBI" id="CHEBI:30616"/>
        <note>ligand shared between dimeric partners</note>
    </ligand>
</feature>
<feature type="binding site" evidence="2">
    <location>
        <position position="90"/>
    </location>
    <ligand>
        <name>Mg(2+)</name>
        <dbReference type="ChEBI" id="CHEBI:18420"/>
    </ligand>
</feature>
<feature type="binding site" evidence="2">
    <location>
        <begin position="138"/>
        <end position="140"/>
    </location>
    <ligand>
        <name>ATP</name>
        <dbReference type="ChEBI" id="CHEBI:30616"/>
        <note>ligand shared between dimeric partners</note>
    </ligand>
</feature>
<feature type="binding site" evidence="2">
    <location>
        <position position="226"/>
    </location>
    <ligand>
        <name>Mg(2+)</name>
        <dbReference type="ChEBI" id="CHEBI:18420"/>
    </ligand>
</feature>
<feature type="site" description="Important for catalytic activity" evidence="2">
    <location>
        <position position="19"/>
    </location>
</feature>
<feature type="non-standard amino acid" description="Selenocysteine" evidence="1">
    <location>
        <position position="16"/>
    </location>
</feature>
<evidence type="ECO:0000255" key="1"/>
<evidence type="ECO:0000255" key="2">
    <source>
        <dbReference type="HAMAP-Rule" id="MF_00625"/>
    </source>
</evidence>
<evidence type="ECO:0000305" key="3"/>
<sequence>MEEKIRLTQYSHGAGUGCKISPKVLGTILHSELEKFYDPNLIVGNETADDAAVYDLGNGTAIISTTDFFMPIVDDPFDFGRIAATNAISDIFAMGGKPIMGIAILGFPTNVLPAEVAQKIVDGGRFACHQAGIALAGGHSIDSPEPIFGLAVTGVIDTEKVKRNASAKSGCKLYMTKPLGIGILTTAEKKGKLKPEHQGLATAAMCQMNSIGSQFSQVDGVTAMTDVTGFGLLGHLIEICEGSNLSAVVFSDKIKTLDGVKDYIAQGCVPGGTGRNFDSYGHKVGILTEEQKAILCDPQTSGGLLVAVELNSVQTVIDIAKDAGIDLYEVGKLKPKSESDIVVEVK</sequence>
<comment type="function">
    <text evidence="2">Synthesizes selenophosphate from selenide and ATP.</text>
</comment>
<comment type="catalytic activity">
    <reaction evidence="2">
        <text>hydrogenselenide + ATP + H2O = selenophosphate + AMP + phosphate + 2 H(+)</text>
        <dbReference type="Rhea" id="RHEA:18737"/>
        <dbReference type="ChEBI" id="CHEBI:15377"/>
        <dbReference type="ChEBI" id="CHEBI:15378"/>
        <dbReference type="ChEBI" id="CHEBI:16144"/>
        <dbReference type="ChEBI" id="CHEBI:29317"/>
        <dbReference type="ChEBI" id="CHEBI:30616"/>
        <dbReference type="ChEBI" id="CHEBI:43474"/>
        <dbReference type="ChEBI" id="CHEBI:456215"/>
        <dbReference type="EC" id="2.7.9.3"/>
    </reaction>
</comment>
<comment type="cofactor">
    <cofactor evidence="2">
        <name>Mg(2+)</name>
        <dbReference type="ChEBI" id="CHEBI:18420"/>
    </cofactor>
    <text evidence="2">Binds 1 Mg(2+) ion per monomer.</text>
</comment>
<comment type="subunit">
    <text evidence="2">Homodimer.</text>
</comment>
<comment type="similarity">
    <text evidence="2 3">Belongs to the selenophosphate synthase 1 family. Class I subfamily.</text>
</comment>
<comment type="sequence caution" evidence="3">
    <conflict type="erroneous termination">
        <sequence resource="EMBL-CDS" id="AAC21869"/>
    </conflict>
    <text>Truncated C-terminus.</text>
</comment>
<name>SELD_HAEIN</name>
<proteinExistence type="inferred from homology"/>